<evidence type="ECO:0000255" key="1">
    <source>
        <dbReference type="HAMAP-Rule" id="MF_01031"/>
    </source>
</evidence>
<organism>
    <name type="scientific">Oenococcus oeni (strain ATCC BAA-331 / PSU-1)</name>
    <dbReference type="NCBI Taxonomy" id="203123"/>
    <lineage>
        <taxon>Bacteria</taxon>
        <taxon>Bacillati</taxon>
        <taxon>Bacillota</taxon>
        <taxon>Bacilli</taxon>
        <taxon>Lactobacillales</taxon>
        <taxon>Lactobacillaceae</taxon>
        <taxon>Oenococcus</taxon>
    </lineage>
</organism>
<protein>
    <recommendedName>
        <fullName evidence="1">3-isopropylmalate dehydratase small subunit</fullName>
        <ecNumber evidence="1">4.2.1.33</ecNumber>
    </recommendedName>
    <alternativeName>
        <fullName evidence="1">Alpha-IPM isomerase</fullName>
        <shortName evidence="1">IPMI</shortName>
    </alternativeName>
    <alternativeName>
        <fullName evidence="1">Isopropylmalate isomerase</fullName>
    </alternativeName>
</protein>
<sequence>MKKITTINSGVIPLMRDNIDTDQIIPKQFLKNILKSGYGRNLFYDWRYKATSKEANPDFILNKPEYKQAQILVTGENFGCGSSREHAVWALKDYGFQVVIAGSYSDIFYMNSTKNGLLAIELPKKDRTILASIPAKEKIIVDLPRQQVRYEKYQFDFSINPLWKHKFINGLDDIAITMNYAKKIEAYEKEIPNFN</sequence>
<dbReference type="EC" id="4.2.1.33" evidence="1"/>
<dbReference type="EMBL" id="CP000411">
    <property type="protein sequence ID" value="ABJ57570.1"/>
    <property type="molecule type" value="Genomic_DNA"/>
</dbReference>
<dbReference type="RefSeq" id="WP_002819581.1">
    <property type="nucleotide sequence ID" value="NC_008528.1"/>
</dbReference>
<dbReference type="SMR" id="Q04DA2"/>
<dbReference type="STRING" id="203123.OEOE_1726"/>
<dbReference type="GeneID" id="75066634"/>
<dbReference type="KEGG" id="ooe:OEOE_1726"/>
<dbReference type="eggNOG" id="COG0066">
    <property type="taxonomic scope" value="Bacteria"/>
</dbReference>
<dbReference type="HOGENOM" id="CLU_081378_0_3_9"/>
<dbReference type="UniPathway" id="UPA00048">
    <property type="reaction ID" value="UER00071"/>
</dbReference>
<dbReference type="Proteomes" id="UP000000774">
    <property type="component" value="Chromosome"/>
</dbReference>
<dbReference type="GO" id="GO:0009316">
    <property type="term" value="C:3-isopropylmalate dehydratase complex"/>
    <property type="evidence" value="ECO:0007669"/>
    <property type="project" value="InterPro"/>
</dbReference>
<dbReference type="GO" id="GO:0003861">
    <property type="term" value="F:3-isopropylmalate dehydratase activity"/>
    <property type="evidence" value="ECO:0007669"/>
    <property type="project" value="UniProtKB-UniRule"/>
</dbReference>
<dbReference type="GO" id="GO:0009098">
    <property type="term" value="P:L-leucine biosynthetic process"/>
    <property type="evidence" value="ECO:0007669"/>
    <property type="project" value="UniProtKB-UniRule"/>
</dbReference>
<dbReference type="CDD" id="cd01577">
    <property type="entry name" value="IPMI_Swivel"/>
    <property type="match status" value="1"/>
</dbReference>
<dbReference type="FunFam" id="3.20.19.10:FF:000003">
    <property type="entry name" value="3-isopropylmalate dehydratase small subunit"/>
    <property type="match status" value="1"/>
</dbReference>
<dbReference type="Gene3D" id="3.20.19.10">
    <property type="entry name" value="Aconitase, domain 4"/>
    <property type="match status" value="1"/>
</dbReference>
<dbReference type="HAMAP" id="MF_01031">
    <property type="entry name" value="LeuD_type1"/>
    <property type="match status" value="1"/>
</dbReference>
<dbReference type="InterPro" id="IPR004431">
    <property type="entry name" value="3-IsopropMal_deHydase_ssu"/>
</dbReference>
<dbReference type="InterPro" id="IPR015928">
    <property type="entry name" value="Aconitase/3IPM_dehydase_swvl"/>
</dbReference>
<dbReference type="InterPro" id="IPR000573">
    <property type="entry name" value="AconitaseA/IPMdHydase_ssu_swvl"/>
</dbReference>
<dbReference type="InterPro" id="IPR033940">
    <property type="entry name" value="IPMI_Swivel"/>
</dbReference>
<dbReference type="InterPro" id="IPR050075">
    <property type="entry name" value="LeuD"/>
</dbReference>
<dbReference type="NCBIfam" id="TIGR00171">
    <property type="entry name" value="leuD"/>
    <property type="match status" value="1"/>
</dbReference>
<dbReference type="NCBIfam" id="NF002458">
    <property type="entry name" value="PRK01641.1"/>
    <property type="match status" value="1"/>
</dbReference>
<dbReference type="PANTHER" id="PTHR43345:SF5">
    <property type="entry name" value="3-ISOPROPYLMALATE DEHYDRATASE SMALL SUBUNIT"/>
    <property type="match status" value="1"/>
</dbReference>
<dbReference type="PANTHER" id="PTHR43345">
    <property type="entry name" value="3-ISOPROPYLMALATE DEHYDRATASE SMALL SUBUNIT 2-RELATED-RELATED"/>
    <property type="match status" value="1"/>
</dbReference>
<dbReference type="Pfam" id="PF00694">
    <property type="entry name" value="Aconitase_C"/>
    <property type="match status" value="1"/>
</dbReference>
<dbReference type="SUPFAM" id="SSF52016">
    <property type="entry name" value="LeuD/IlvD-like"/>
    <property type="match status" value="1"/>
</dbReference>
<keyword id="KW-0028">Amino-acid biosynthesis</keyword>
<keyword id="KW-0100">Branched-chain amino acid biosynthesis</keyword>
<keyword id="KW-0432">Leucine biosynthesis</keyword>
<keyword id="KW-0456">Lyase</keyword>
<keyword id="KW-1185">Reference proteome</keyword>
<comment type="function">
    <text evidence="1">Catalyzes the isomerization between 2-isopropylmalate and 3-isopropylmalate, via the formation of 2-isopropylmaleate.</text>
</comment>
<comment type="catalytic activity">
    <reaction evidence="1">
        <text>(2R,3S)-3-isopropylmalate = (2S)-2-isopropylmalate</text>
        <dbReference type="Rhea" id="RHEA:32287"/>
        <dbReference type="ChEBI" id="CHEBI:1178"/>
        <dbReference type="ChEBI" id="CHEBI:35121"/>
        <dbReference type="EC" id="4.2.1.33"/>
    </reaction>
</comment>
<comment type="pathway">
    <text evidence="1">Amino-acid biosynthesis; L-leucine biosynthesis; L-leucine from 3-methyl-2-oxobutanoate: step 2/4.</text>
</comment>
<comment type="subunit">
    <text evidence="1">Heterodimer of LeuC and LeuD.</text>
</comment>
<comment type="similarity">
    <text evidence="1">Belongs to the LeuD family. LeuD type 1 subfamily.</text>
</comment>
<reference key="1">
    <citation type="journal article" date="2006" name="Proc. Natl. Acad. Sci. U.S.A.">
        <title>Comparative genomics of the lactic acid bacteria.</title>
        <authorList>
            <person name="Makarova K.S."/>
            <person name="Slesarev A."/>
            <person name="Wolf Y.I."/>
            <person name="Sorokin A."/>
            <person name="Mirkin B."/>
            <person name="Koonin E.V."/>
            <person name="Pavlov A."/>
            <person name="Pavlova N."/>
            <person name="Karamychev V."/>
            <person name="Polouchine N."/>
            <person name="Shakhova V."/>
            <person name="Grigoriev I."/>
            <person name="Lou Y."/>
            <person name="Rohksar D."/>
            <person name="Lucas S."/>
            <person name="Huang K."/>
            <person name="Goodstein D.M."/>
            <person name="Hawkins T."/>
            <person name="Plengvidhya V."/>
            <person name="Welker D."/>
            <person name="Hughes J."/>
            <person name="Goh Y."/>
            <person name="Benson A."/>
            <person name="Baldwin K."/>
            <person name="Lee J.-H."/>
            <person name="Diaz-Muniz I."/>
            <person name="Dosti B."/>
            <person name="Smeianov V."/>
            <person name="Wechter W."/>
            <person name="Barabote R."/>
            <person name="Lorca G."/>
            <person name="Altermann E."/>
            <person name="Barrangou R."/>
            <person name="Ganesan B."/>
            <person name="Xie Y."/>
            <person name="Rawsthorne H."/>
            <person name="Tamir D."/>
            <person name="Parker C."/>
            <person name="Breidt F."/>
            <person name="Broadbent J.R."/>
            <person name="Hutkins R."/>
            <person name="O'Sullivan D."/>
            <person name="Steele J."/>
            <person name="Unlu G."/>
            <person name="Saier M.H. Jr."/>
            <person name="Klaenhammer T."/>
            <person name="Richardson P."/>
            <person name="Kozyavkin S."/>
            <person name="Weimer B.C."/>
            <person name="Mills D.A."/>
        </authorList>
    </citation>
    <scope>NUCLEOTIDE SEQUENCE [LARGE SCALE GENOMIC DNA]</scope>
    <source>
        <strain>ATCC BAA-331 / PSU-1</strain>
    </source>
</reference>
<gene>
    <name evidence="1" type="primary">leuD</name>
    <name type="ordered locus">OEOE_1726</name>
</gene>
<name>LEUD_OENOB</name>
<accession>Q04DA2</accession>
<proteinExistence type="inferred from homology"/>
<feature type="chain" id="PRO_1000063801" description="3-isopropylmalate dehydratase small subunit">
    <location>
        <begin position="1"/>
        <end position="195"/>
    </location>
</feature>